<gene>
    <name type="primary">rps24</name>
    <name type="ORF">DDB_G0275473</name>
</gene>
<organism>
    <name type="scientific">Dictyostelium discoideum</name>
    <name type="common">Social amoeba</name>
    <dbReference type="NCBI Taxonomy" id="44689"/>
    <lineage>
        <taxon>Eukaryota</taxon>
        <taxon>Amoebozoa</taxon>
        <taxon>Evosea</taxon>
        <taxon>Eumycetozoa</taxon>
        <taxon>Dictyostelia</taxon>
        <taxon>Dictyosteliales</taxon>
        <taxon>Dictyosteliaceae</taxon>
        <taxon>Dictyostelium</taxon>
    </lineage>
</organism>
<sequence>MDKAAVVVRTRKVLTNRLLSRKQFVVEVVHPGKANVSKKDLKTTIAKLHKVADPETIFLFGFKTDFGGGKSTGFGLIYDNLEIAKKYEPKYRLARAGLYTKPQTSRKQRKEKKNRLKKAGKKTAKK</sequence>
<reference key="1">
    <citation type="journal article" date="2002" name="Nature">
        <title>Sequence and analysis of chromosome 2 of Dictyostelium discoideum.</title>
        <authorList>
            <person name="Gloeckner G."/>
            <person name="Eichinger L."/>
            <person name="Szafranski K."/>
            <person name="Pachebat J.A."/>
            <person name="Bankier A.T."/>
            <person name="Dear P.H."/>
            <person name="Lehmann R."/>
            <person name="Baumgart C."/>
            <person name="Parra G."/>
            <person name="Abril J.F."/>
            <person name="Guigo R."/>
            <person name="Kumpf K."/>
            <person name="Tunggal B."/>
            <person name="Cox E.C."/>
            <person name="Quail M.A."/>
            <person name="Platzer M."/>
            <person name="Rosenthal A."/>
            <person name="Noegel A.A."/>
        </authorList>
    </citation>
    <scope>NUCLEOTIDE SEQUENCE [LARGE SCALE GENOMIC DNA]</scope>
    <source>
        <strain>AX4</strain>
    </source>
</reference>
<reference key="2">
    <citation type="journal article" date="2005" name="Nature">
        <title>The genome of the social amoeba Dictyostelium discoideum.</title>
        <authorList>
            <person name="Eichinger L."/>
            <person name="Pachebat J.A."/>
            <person name="Gloeckner G."/>
            <person name="Rajandream M.A."/>
            <person name="Sucgang R."/>
            <person name="Berriman M."/>
            <person name="Song J."/>
            <person name="Olsen R."/>
            <person name="Szafranski K."/>
            <person name="Xu Q."/>
            <person name="Tunggal B."/>
            <person name="Kummerfeld S."/>
            <person name="Madera M."/>
            <person name="Konfortov B.A."/>
            <person name="Rivero F."/>
            <person name="Bankier A.T."/>
            <person name="Lehmann R."/>
            <person name="Hamlin N."/>
            <person name="Davies R."/>
            <person name="Gaudet P."/>
            <person name="Fey P."/>
            <person name="Pilcher K."/>
            <person name="Chen G."/>
            <person name="Saunders D."/>
            <person name="Sodergren E.J."/>
            <person name="Davis P."/>
            <person name="Kerhornou A."/>
            <person name="Nie X."/>
            <person name="Hall N."/>
            <person name="Anjard C."/>
            <person name="Hemphill L."/>
            <person name="Bason N."/>
            <person name="Farbrother P."/>
            <person name="Desany B."/>
            <person name="Just E."/>
            <person name="Morio T."/>
            <person name="Rost R."/>
            <person name="Churcher C.M."/>
            <person name="Cooper J."/>
            <person name="Haydock S."/>
            <person name="van Driessche N."/>
            <person name="Cronin A."/>
            <person name="Goodhead I."/>
            <person name="Muzny D.M."/>
            <person name="Mourier T."/>
            <person name="Pain A."/>
            <person name="Lu M."/>
            <person name="Harper D."/>
            <person name="Lindsay R."/>
            <person name="Hauser H."/>
            <person name="James K.D."/>
            <person name="Quiles M."/>
            <person name="Madan Babu M."/>
            <person name="Saito T."/>
            <person name="Buchrieser C."/>
            <person name="Wardroper A."/>
            <person name="Felder M."/>
            <person name="Thangavelu M."/>
            <person name="Johnson D."/>
            <person name="Knights A."/>
            <person name="Loulseged H."/>
            <person name="Mungall K.L."/>
            <person name="Oliver K."/>
            <person name="Price C."/>
            <person name="Quail M.A."/>
            <person name="Urushihara H."/>
            <person name="Hernandez J."/>
            <person name="Rabbinowitsch E."/>
            <person name="Steffen D."/>
            <person name="Sanders M."/>
            <person name="Ma J."/>
            <person name="Kohara Y."/>
            <person name="Sharp S."/>
            <person name="Simmonds M.N."/>
            <person name="Spiegler S."/>
            <person name="Tivey A."/>
            <person name="Sugano S."/>
            <person name="White B."/>
            <person name="Walker D."/>
            <person name="Woodward J.R."/>
            <person name="Winckler T."/>
            <person name="Tanaka Y."/>
            <person name="Shaulsky G."/>
            <person name="Schleicher M."/>
            <person name="Weinstock G.M."/>
            <person name="Rosenthal A."/>
            <person name="Cox E.C."/>
            <person name="Chisholm R.L."/>
            <person name="Gibbs R.A."/>
            <person name="Loomis W.F."/>
            <person name="Platzer M."/>
            <person name="Kay R.R."/>
            <person name="Williams J.G."/>
            <person name="Dear P.H."/>
            <person name="Noegel A.A."/>
            <person name="Barrell B.G."/>
            <person name="Kuspa A."/>
        </authorList>
    </citation>
    <scope>NUCLEOTIDE SEQUENCE [LARGE SCALE GENOMIC DNA]</scope>
    <source>
        <strain>AX4</strain>
    </source>
</reference>
<accession>Q75K27</accession>
<accession>Q552Q0</accession>
<evidence type="ECO:0000256" key="1">
    <source>
        <dbReference type="SAM" id="MobiDB-lite"/>
    </source>
</evidence>
<evidence type="ECO:0000305" key="2"/>
<keyword id="KW-1185">Reference proteome</keyword>
<keyword id="KW-0687">Ribonucleoprotein</keyword>
<keyword id="KW-0689">Ribosomal protein</keyword>
<protein>
    <recommendedName>
        <fullName evidence="2">Small ribosomal subunit protein eS24</fullName>
    </recommendedName>
    <alternativeName>
        <fullName>40S ribosomal protein S24</fullName>
    </alternativeName>
</protein>
<proteinExistence type="inferred from homology"/>
<dbReference type="EMBL" id="AAFI02000013">
    <property type="protein sequence ID" value="EAL69487.1"/>
    <property type="molecule type" value="Genomic_DNA"/>
</dbReference>
<dbReference type="RefSeq" id="XP_643631.1">
    <property type="nucleotide sequence ID" value="XM_638539.1"/>
</dbReference>
<dbReference type="SMR" id="Q75K27"/>
<dbReference type="FunCoup" id="Q75K27">
    <property type="interactions" value="910"/>
</dbReference>
<dbReference type="STRING" id="44689.Q75K27"/>
<dbReference type="PaxDb" id="44689-DDB0231063"/>
<dbReference type="EnsemblProtists" id="EAL69487">
    <property type="protein sequence ID" value="EAL69487"/>
    <property type="gene ID" value="DDB_G0275473"/>
</dbReference>
<dbReference type="GeneID" id="8620218"/>
<dbReference type="KEGG" id="ddi:DDB_G0275473"/>
<dbReference type="dictyBase" id="DDB_G0275473">
    <property type="gene designation" value="rps24"/>
</dbReference>
<dbReference type="VEuPathDB" id="AmoebaDB:DDB_G0275473"/>
<dbReference type="eggNOG" id="KOG3424">
    <property type="taxonomic scope" value="Eukaryota"/>
</dbReference>
<dbReference type="HOGENOM" id="CLU_107248_1_0_1"/>
<dbReference type="InParanoid" id="Q75K27"/>
<dbReference type="OMA" id="IRVKKYM"/>
<dbReference type="PhylomeDB" id="Q75K27"/>
<dbReference type="Reactome" id="R-DDI-156827">
    <property type="pathway name" value="L13a-mediated translational silencing of Ceruloplasmin expression"/>
</dbReference>
<dbReference type="Reactome" id="R-DDI-1799339">
    <property type="pathway name" value="SRP-dependent cotranslational protein targeting to membrane"/>
</dbReference>
<dbReference type="Reactome" id="R-DDI-72689">
    <property type="pathway name" value="Formation of a pool of free 40S subunits"/>
</dbReference>
<dbReference type="Reactome" id="R-DDI-72695">
    <property type="pathway name" value="Formation of the ternary complex, and subsequently, the 43S complex"/>
</dbReference>
<dbReference type="Reactome" id="R-DDI-72702">
    <property type="pathway name" value="Ribosomal scanning and start codon recognition"/>
</dbReference>
<dbReference type="Reactome" id="R-DDI-72706">
    <property type="pathway name" value="GTP hydrolysis and joining of the 60S ribosomal subunit"/>
</dbReference>
<dbReference type="Reactome" id="R-DDI-975956">
    <property type="pathway name" value="Nonsense Mediated Decay (NMD) independent of the Exon Junction Complex (EJC)"/>
</dbReference>
<dbReference type="Reactome" id="R-DDI-975957">
    <property type="pathway name" value="Nonsense Mediated Decay (NMD) enhanced by the Exon Junction Complex (EJC)"/>
</dbReference>
<dbReference type="PRO" id="PR:Q75K27"/>
<dbReference type="Proteomes" id="UP000002195">
    <property type="component" value="Chromosome 2"/>
</dbReference>
<dbReference type="GO" id="GO:1990904">
    <property type="term" value="C:ribonucleoprotein complex"/>
    <property type="evidence" value="ECO:0007669"/>
    <property type="project" value="UniProtKB-KW"/>
</dbReference>
<dbReference type="GO" id="GO:0005840">
    <property type="term" value="C:ribosome"/>
    <property type="evidence" value="ECO:0007669"/>
    <property type="project" value="UniProtKB-KW"/>
</dbReference>
<dbReference type="GO" id="GO:0003735">
    <property type="term" value="F:structural constituent of ribosome"/>
    <property type="evidence" value="ECO:0007669"/>
    <property type="project" value="InterPro"/>
</dbReference>
<dbReference type="GO" id="GO:0006412">
    <property type="term" value="P:translation"/>
    <property type="evidence" value="ECO:0007669"/>
    <property type="project" value="InterPro"/>
</dbReference>
<dbReference type="FunFam" id="3.30.70.3370:FF:000001">
    <property type="entry name" value="40S ribosomal protein S24"/>
    <property type="match status" value="1"/>
</dbReference>
<dbReference type="Gene3D" id="3.30.70.3370">
    <property type="match status" value="1"/>
</dbReference>
<dbReference type="HAMAP" id="MF_00545">
    <property type="entry name" value="Ribosomal_eS24"/>
    <property type="match status" value="1"/>
</dbReference>
<dbReference type="InterPro" id="IPR053709">
    <property type="entry name" value="eRP_eS24_sf"/>
</dbReference>
<dbReference type="InterPro" id="IPR001976">
    <property type="entry name" value="Ribosomal_eS24"/>
</dbReference>
<dbReference type="InterPro" id="IPR018098">
    <property type="entry name" value="Ribosomal_eS24_CS"/>
</dbReference>
<dbReference type="InterPro" id="IPR012678">
    <property type="entry name" value="Ribosomal_uL23/eL15/eS24_sf"/>
</dbReference>
<dbReference type="PANTHER" id="PTHR10496">
    <property type="entry name" value="40S RIBOSOMAL PROTEIN S24"/>
    <property type="match status" value="1"/>
</dbReference>
<dbReference type="Pfam" id="PF01282">
    <property type="entry name" value="Ribosomal_S24e"/>
    <property type="match status" value="1"/>
</dbReference>
<dbReference type="SUPFAM" id="SSF54189">
    <property type="entry name" value="Ribosomal proteins S24e, L23 and L15e"/>
    <property type="match status" value="1"/>
</dbReference>
<dbReference type="PROSITE" id="PS00529">
    <property type="entry name" value="RIBOSOMAL_S24E"/>
    <property type="match status" value="1"/>
</dbReference>
<name>RS24_DICDI</name>
<comment type="similarity">
    <text evidence="2">Belongs to the eukaryotic ribosomal protein eS24 family.</text>
</comment>
<feature type="chain" id="PRO_0000326196" description="Small ribosomal subunit protein eS24">
    <location>
        <begin position="1"/>
        <end position="126"/>
    </location>
</feature>
<feature type="region of interest" description="Disordered" evidence="1">
    <location>
        <begin position="98"/>
        <end position="126"/>
    </location>
</feature>
<feature type="compositionally biased region" description="Basic residues" evidence="1">
    <location>
        <begin position="104"/>
        <end position="126"/>
    </location>
</feature>